<reference key="1">
    <citation type="submission" date="2007-11" db="EMBL/GenBank/DDBJ databases">
        <authorList>
            <consortium name="The Salmonella enterica serovar Arizonae Genome Sequencing Project"/>
            <person name="McClelland M."/>
            <person name="Sanderson E.K."/>
            <person name="Porwollik S."/>
            <person name="Spieth J."/>
            <person name="Clifton W.S."/>
            <person name="Fulton R."/>
            <person name="Chunyan W."/>
            <person name="Wollam A."/>
            <person name="Shah N."/>
            <person name="Pepin K."/>
            <person name="Bhonagiri V."/>
            <person name="Nash W."/>
            <person name="Johnson M."/>
            <person name="Thiruvilangam P."/>
            <person name="Wilson R."/>
        </authorList>
    </citation>
    <scope>NUCLEOTIDE SEQUENCE [LARGE SCALE GENOMIC DNA]</scope>
    <source>
        <strain>ATCC BAA-731 / CDC346-86 / RSK2980</strain>
    </source>
</reference>
<proteinExistence type="inferred from homology"/>
<feature type="chain" id="PRO_1000088475" description="Xanthine-guanine phosphoribosyltransferase">
    <location>
        <begin position="1"/>
        <end position="152"/>
    </location>
</feature>
<feature type="binding site" evidence="1">
    <location>
        <begin position="37"/>
        <end position="38"/>
    </location>
    <ligand>
        <name>5-phospho-alpha-D-ribose 1-diphosphate</name>
        <dbReference type="ChEBI" id="CHEBI:58017"/>
    </ligand>
</feature>
<feature type="binding site" evidence="1">
    <location>
        <position position="69"/>
    </location>
    <ligand>
        <name>5-phospho-alpha-D-ribose 1-diphosphate</name>
        <dbReference type="ChEBI" id="CHEBI:58017"/>
    </ligand>
</feature>
<feature type="binding site" evidence="1">
    <location>
        <position position="69"/>
    </location>
    <ligand>
        <name>GMP</name>
        <dbReference type="ChEBI" id="CHEBI:58115"/>
    </ligand>
</feature>
<feature type="binding site" evidence="1">
    <location>
        <begin position="88"/>
        <end position="96"/>
    </location>
    <ligand>
        <name>5-phospho-alpha-D-ribose 1-diphosphate</name>
        <dbReference type="ChEBI" id="CHEBI:58017"/>
    </ligand>
</feature>
<feature type="binding site" evidence="1">
    <location>
        <position position="89"/>
    </location>
    <ligand>
        <name>Mg(2+)</name>
        <dbReference type="ChEBI" id="CHEBI:18420"/>
    </ligand>
</feature>
<feature type="binding site" evidence="1">
    <location>
        <begin position="92"/>
        <end position="96"/>
    </location>
    <ligand>
        <name>GMP</name>
        <dbReference type="ChEBI" id="CHEBI:58115"/>
    </ligand>
</feature>
<feature type="binding site" evidence="1">
    <location>
        <position position="92"/>
    </location>
    <ligand>
        <name>guanine</name>
        <dbReference type="ChEBI" id="CHEBI:16235"/>
    </ligand>
</feature>
<feature type="binding site" evidence="1">
    <location>
        <position position="92"/>
    </location>
    <ligand>
        <name>xanthine</name>
        <dbReference type="ChEBI" id="CHEBI:17712"/>
    </ligand>
</feature>
<feature type="binding site" evidence="1">
    <location>
        <begin position="134"/>
        <end position="135"/>
    </location>
    <ligand>
        <name>GMP</name>
        <dbReference type="ChEBI" id="CHEBI:58115"/>
    </ligand>
</feature>
<feature type="binding site" evidence="1">
    <location>
        <position position="135"/>
    </location>
    <ligand>
        <name>guanine</name>
        <dbReference type="ChEBI" id="CHEBI:16235"/>
    </ligand>
</feature>
<feature type="binding site" evidence="1">
    <location>
        <position position="135"/>
    </location>
    <ligand>
        <name>xanthine</name>
        <dbReference type="ChEBI" id="CHEBI:17712"/>
    </ligand>
</feature>
<comment type="function">
    <text evidence="1">Purine salvage pathway enzyme that catalyzes the transfer of the ribosyl-5-phosphate group from 5-phospho-alpha-D-ribose 1-diphosphate (PRPP) to the N9 position of the 6-oxopurines guanine and xanthine to form the corresponding ribonucleotides GMP (guanosine 5'-monophosphate) and XMP (xanthosine 5'-monophosphate), with the release of PPi. To a lesser extent, also acts on hypoxanthine.</text>
</comment>
<comment type="catalytic activity">
    <reaction evidence="1">
        <text>GMP + diphosphate = guanine + 5-phospho-alpha-D-ribose 1-diphosphate</text>
        <dbReference type="Rhea" id="RHEA:25424"/>
        <dbReference type="ChEBI" id="CHEBI:16235"/>
        <dbReference type="ChEBI" id="CHEBI:33019"/>
        <dbReference type="ChEBI" id="CHEBI:58017"/>
        <dbReference type="ChEBI" id="CHEBI:58115"/>
    </reaction>
    <physiologicalReaction direction="right-to-left" evidence="1">
        <dbReference type="Rhea" id="RHEA:25426"/>
    </physiologicalReaction>
</comment>
<comment type="catalytic activity">
    <reaction evidence="1">
        <text>XMP + diphosphate = xanthine + 5-phospho-alpha-D-ribose 1-diphosphate</text>
        <dbReference type="Rhea" id="RHEA:10800"/>
        <dbReference type="ChEBI" id="CHEBI:17712"/>
        <dbReference type="ChEBI" id="CHEBI:33019"/>
        <dbReference type="ChEBI" id="CHEBI:57464"/>
        <dbReference type="ChEBI" id="CHEBI:58017"/>
        <dbReference type="EC" id="2.4.2.22"/>
    </reaction>
    <physiologicalReaction direction="right-to-left" evidence="1">
        <dbReference type="Rhea" id="RHEA:10802"/>
    </physiologicalReaction>
</comment>
<comment type="catalytic activity">
    <reaction evidence="1">
        <text>IMP + diphosphate = hypoxanthine + 5-phospho-alpha-D-ribose 1-diphosphate</text>
        <dbReference type="Rhea" id="RHEA:17973"/>
        <dbReference type="ChEBI" id="CHEBI:17368"/>
        <dbReference type="ChEBI" id="CHEBI:33019"/>
        <dbReference type="ChEBI" id="CHEBI:58017"/>
        <dbReference type="ChEBI" id="CHEBI:58053"/>
    </reaction>
    <physiologicalReaction direction="right-to-left" evidence="1">
        <dbReference type="Rhea" id="RHEA:17975"/>
    </physiologicalReaction>
</comment>
<comment type="cofactor">
    <cofactor evidence="1">
        <name>Mg(2+)</name>
        <dbReference type="ChEBI" id="CHEBI:18420"/>
    </cofactor>
</comment>
<comment type="pathway">
    <text evidence="1">Purine metabolism; GMP biosynthesis via salvage pathway; GMP from guanine: step 1/1.</text>
</comment>
<comment type="pathway">
    <text evidence="1">Purine metabolism; XMP biosynthesis via salvage pathway; XMP from xanthine: step 1/1.</text>
</comment>
<comment type="subunit">
    <text evidence="1">Homotetramer.</text>
</comment>
<comment type="subcellular location">
    <subcellularLocation>
        <location evidence="1">Cell inner membrane</location>
        <topology evidence="1">Peripheral membrane protein</topology>
    </subcellularLocation>
</comment>
<comment type="similarity">
    <text evidence="1">Belongs to the purine/pyrimidine phosphoribosyltransferase family. XGPT subfamily.</text>
</comment>
<sequence length="152" mass="16970">MSEKYVVTWDMLQIHARKLASRLMPSEQWKGIIAVSRGGLVPGALLARELGIRHVDTVCISSYDHDNQRELKVLKRAEGDGEGFIVIDDLVDTGGTAVAIREMYPKAHFVTIFAKPAGRPLVDDYVIDIPQNTWIEQPWDMGVVFVPPISGR</sequence>
<keyword id="KW-0997">Cell inner membrane</keyword>
<keyword id="KW-1003">Cell membrane</keyword>
<keyword id="KW-0328">Glycosyltransferase</keyword>
<keyword id="KW-0460">Magnesium</keyword>
<keyword id="KW-0472">Membrane</keyword>
<keyword id="KW-0479">Metal-binding</keyword>
<keyword id="KW-0660">Purine salvage</keyword>
<keyword id="KW-1185">Reference proteome</keyword>
<keyword id="KW-0808">Transferase</keyword>
<accession>A9MNR9</accession>
<protein>
    <recommendedName>
        <fullName evidence="1">Xanthine-guanine phosphoribosyltransferase</fullName>
        <shortName evidence="1">XGPRT</shortName>
        <ecNumber evidence="1">2.4.2.-</ecNumber>
        <ecNumber evidence="1">2.4.2.22</ecNumber>
    </recommendedName>
    <alternativeName>
        <fullName evidence="1">Xanthine phosphoribosyltransferase</fullName>
    </alternativeName>
</protein>
<dbReference type="EC" id="2.4.2.-" evidence="1"/>
<dbReference type="EC" id="2.4.2.22" evidence="1"/>
<dbReference type="EMBL" id="CP000880">
    <property type="protein sequence ID" value="ABX22551.1"/>
    <property type="molecule type" value="Genomic_DNA"/>
</dbReference>
<dbReference type="SMR" id="A9MNR9"/>
<dbReference type="STRING" id="41514.SARI_02695"/>
<dbReference type="KEGG" id="ses:SARI_02695"/>
<dbReference type="HOGENOM" id="CLU_080904_3_0_6"/>
<dbReference type="UniPathway" id="UPA00602">
    <property type="reaction ID" value="UER00658"/>
</dbReference>
<dbReference type="UniPathway" id="UPA00909">
    <property type="reaction ID" value="UER00887"/>
</dbReference>
<dbReference type="Proteomes" id="UP000002084">
    <property type="component" value="Chromosome"/>
</dbReference>
<dbReference type="GO" id="GO:0005829">
    <property type="term" value="C:cytosol"/>
    <property type="evidence" value="ECO:0007669"/>
    <property type="project" value="TreeGrafter"/>
</dbReference>
<dbReference type="GO" id="GO:0005886">
    <property type="term" value="C:plasma membrane"/>
    <property type="evidence" value="ECO:0007669"/>
    <property type="project" value="UniProtKB-SubCell"/>
</dbReference>
<dbReference type="GO" id="GO:0052657">
    <property type="term" value="F:guanine phosphoribosyltransferase activity"/>
    <property type="evidence" value="ECO:0007669"/>
    <property type="project" value="RHEA"/>
</dbReference>
<dbReference type="GO" id="GO:0004422">
    <property type="term" value="F:hypoxanthine phosphoribosyltransferase activity"/>
    <property type="evidence" value="ECO:0007669"/>
    <property type="project" value="RHEA"/>
</dbReference>
<dbReference type="GO" id="GO:0000287">
    <property type="term" value="F:magnesium ion binding"/>
    <property type="evidence" value="ECO:0007669"/>
    <property type="project" value="UniProtKB-UniRule"/>
</dbReference>
<dbReference type="GO" id="GO:0000310">
    <property type="term" value="F:xanthine phosphoribosyltransferase activity"/>
    <property type="evidence" value="ECO:0007669"/>
    <property type="project" value="UniProtKB-UniRule"/>
</dbReference>
<dbReference type="GO" id="GO:0032263">
    <property type="term" value="P:GMP salvage"/>
    <property type="evidence" value="ECO:0007669"/>
    <property type="project" value="UniProtKB-UniRule"/>
</dbReference>
<dbReference type="GO" id="GO:0032264">
    <property type="term" value="P:IMP salvage"/>
    <property type="evidence" value="ECO:0007669"/>
    <property type="project" value="TreeGrafter"/>
</dbReference>
<dbReference type="GO" id="GO:0006166">
    <property type="term" value="P:purine ribonucleoside salvage"/>
    <property type="evidence" value="ECO:0007669"/>
    <property type="project" value="UniProtKB-KW"/>
</dbReference>
<dbReference type="GO" id="GO:0032265">
    <property type="term" value="P:XMP salvage"/>
    <property type="evidence" value="ECO:0007669"/>
    <property type="project" value="UniProtKB-UniRule"/>
</dbReference>
<dbReference type="CDD" id="cd06223">
    <property type="entry name" value="PRTases_typeI"/>
    <property type="match status" value="1"/>
</dbReference>
<dbReference type="FunFam" id="3.40.50.2020:FF:000009">
    <property type="entry name" value="Xanthine phosphoribosyltransferase"/>
    <property type="match status" value="1"/>
</dbReference>
<dbReference type="Gene3D" id="3.40.50.2020">
    <property type="match status" value="1"/>
</dbReference>
<dbReference type="HAMAP" id="MF_01903">
    <property type="entry name" value="XGPRT"/>
    <property type="match status" value="1"/>
</dbReference>
<dbReference type="InterPro" id="IPR000836">
    <property type="entry name" value="PRibTrfase_dom"/>
</dbReference>
<dbReference type="InterPro" id="IPR029057">
    <property type="entry name" value="PRTase-like"/>
</dbReference>
<dbReference type="InterPro" id="IPR023747">
    <property type="entry name" value="Xanthine_Guanine_PRibTrfase"/>
</dbReference>
<dbReference type="NCBIfam" id="NF006613">
    <property type="entry name" value="PRK09177.1"/>
    <property type="match status" value="1"/>
</dbReference>
<dbReference type="PANTHER" id="PTHR39563">
    <property type="entry name" value="XANTHINE PHOSPHORIBOSYLTRANSFERASE"/>
    <property type="match status" value="1"/>
</dbReference>
<dbReference type="PANTHER" id="PTHR39563:SF1">
    <property type="entry name" value="XANTHINE-GUANINE PHOSPHORIBOSYLTRANSFERASE"/>
    <property type="match status" value="1"/>
</dbReference>
<dbReference type="Pfam" id="PF00156">
    <property type="entry name" value="Pribosyltran"/>
    <property type="match status" value="1"/>
</dbReference>
<dbReference type="SUPFAM" id="SSF53271">
    <property type="entry name" value="PRTase-like"/>
    <property type="match status" value="1"/>
</dbReference>
<dbReference type="PROSITE" id="PS00103">
    <property type="entry name" value="PUR_PYR_PR_TRANSFER"/>
    <property type="match status" value="1"/>
</dbReference>
<evidence type="ECO:0000255" key="1">
    <source>
        <dbReference type="HAMAP-Rule" id="MF_01903"/>
    </source>
</evidence>
<name>XGPT_SALAR</name>
<gene>
    <name evidence="1" type="primary">gpt</name>
    <name type="ordered locus">SARI_02695</name>
</gene>
<organism>
    <name type="scientific">Salmonella arizonae (strain ATCC BAA-731 / CDC346-86 / RSK2980)</name>
    <dbReference type="NCBI Taxonomy" id="41514"/>
    <lineage>
        <taxon>Bacteria</taxon>
        <taxon>Pseudomonadati</taxon>
        <taxon>Pseudomonadota</taxon>
        <taxon>Gammaproteobacteria</taxon>
        <taxon>Enterobacterales</taxon>
        <taxon>Enterobacteriaceae</taxon>
        <taxon>Salmonella</taxon>
    </lineage>
</organism>